<proteinExistence type="inferred from homology"/>
<evidence type="ECO:0000255" key="1">
    <source>
        <dbReference type="HAMAP-Rule" id="MF_01208"/>
    </source>
</evidence>
<comment type="function">
    <text evidence="1">Catalyzes the transfer of a ribosyl phosphate group from 5-phosphoribose 1-diphosphate to orotate, leading to the formation of orotidine monophosphate (OMP).</text>
</comment>
<comment type="catalytic activity">
    <reaction evidence="1">
        <text>orotidine 5'-phosphate + diphosphate = orotate + 5-phospho-alpha-D-ribose 1-diphosphate</text>
        <dbReference type="Rhea" id="RHEA:10380"/>
        <dbReference type="ChEBI" id="CHEBI:30839"/>
        <dbReference type="ChEBI" id="CHEBI:33019"/>
        <dbReference type="ChEBI" id="CHEBI:57538"/>
        <dbReference type="ChEBI" id="CHEBI:58017"/>
        <dbReference type="EC" id="2.4.2.10"/>
    </reaction>
</comment>
<comment type="cofactor">
    <cofactor evidence="1">
        <name>Mg(2+)</name>
        <dbReference type="ChEBI" id="CHEBI:18420"/>
    </cofactor>
</comment>
<comment type="pathway">
    <text evidence="1">Pyrimidine metabolism; UMP biosynthesis via de novo pathway; UMP from orotate: step 1/2.</text>
</comment>
<comment type="subunit">
    <text evidence="1">Homodimer.</text>
</comment>
<comment type="similarity">
    <text evidence="1">Belongs to the purine/pyrimidine phosphoribosyltransferase family. PyrE subfamily.</text>
</comment>
<gene>
    <name evidence="1" type="primary">pyrE</name>
    <name type="ordered locus">BLD_0528</name>
</gene>
<reference key="1">
    <citation type="journal article" date="2008" name="BMC Genomics">
        <title>Comparative genomic analysis of the gut bacterium Bifidobacterium longum reveals loci susceptible to deletion during pure culture growth.</title>
        <authorList>
            <person name="Lee J.H."/>
            <person name="Karamychev V.N."/>
            <person name="Kozyavkin S.A."/>
            <person name="Mills D."/>
            <person name="Pavlov A.R."/>
            <person name="Pavlova N.V."/>
            <person name="Polouchine N.N."/>
            <person name="Richardson P.M."/>
            <person name="Shakhova V.V."/>
            <person name="Slesarev A.I."/>
            <person name="Weimer B."/>
            <person name="O'Sullivan D.J."/>
        </authorList>
    </citation>
    <scope>NUCLEOTIDE SEQUENCE [LARGE SCALE GENOMIC DNA]</scope>
    <source>
        <strain>DJO10A</strain>
    </source>
</reference>
<protein>
    <recommendedName>
        <fullName evidence="1">Orotate phosphoribosyltransferase</fullName>
        <shortName evidence="1">OPRT</shortName>
        <shortName evidence="1">OPRTase</shortName>
        <ecNumber evidence="1">2.4.2.10</ecNumber>
    </recommendedName>
</protein>
<accession>B3DS55</accession>
<sequence length="231" mass="24884">MAETLAHRFTEFLLESNALKFGDFTLKSGRKSPYFINAGAFDDGKKIAALGAFYAEKISQAIVHNTIPRNIDTVFGPAYKGIPLAVSTAIALTAGHNMTVGYTFDRKEKKDHGDGGWMVGTPLTDGMKVLLVDDVMTAGTAVREVIPKLKAEANVEVVGLVLSVDRMEKTKDSDLSAVKAVEAEFGFPVLAIANVREIFDAAAKMKNADSAPLLSHDIQQRAAAYLEEYGA</sequence>
<keyword id="KW-0328">Glycosyltransferase</keyword>
<keyword id="KW-0460">Magnesium</keyword>
<keyword id="KW-0665">Pyrimidine biosynthesis</keyword>
<keyword id="KW-0808">Transferase</keyword>
<feature type="chain" id="PRO_1000138764" description="Orotate phosphoribosyltransferase">
    <location>
        <begin position="1"/>
        <end position="231"/>
    </location>
</feature>
<feature type="binding site" description="in other chain" evidence="1">
    <location>
        <position position="27"/>
    </location>
    <ligand>
        <name>5-phospho-alpha-D-ribose 1-diphosphate</name>
        <dbReference type="ChEBI" id="CHEBI:58017"/>
        <note>ligand shared between dimeric partners</note>
    </ligand>
</feature>
<feature type="binding site" description="in other chain" evidence="1">
    <location>
        <begin position="79"/>
        <end position="80"/>
    </location>
    <ligand>
        <name>5-phospho-alpha-D-ribose 1-diphosphate</name>
        <dbReference type="ChEBI" id="CHEBI:58017"/>
        <note>ligand shared between dimeric partners</note>
    </ligand>
</feature>
<feature type="binding site" evidence="1">
    <location>
        <position position="106"/>
    </location>
    <ligand>
        <name>5-phospho-alpha-D-ribose 1-diphosphate</name>
        <dbReference type="ChEBI" id="CHEBI:58017"/>
        <note>ligand shared between dimeric partners</note>
    </ligand>
</feature>
<feature type="binding site" description="in other chain" evidence="1">
    <location>
        <position position="107"/>
    </location>
    <ligand>
        <name>5-phospho-alpha-D-ribose 1-diphosphate</name>
        <dbReference type="ChEBI" id="CHEBI:58017"/>
        <note>ligand shared between dimeric partners</note>
    </ligand>
</feature>
<feature type="binding site" evidence="1">
    <location>
        <position position="110"/>
    </location>
    <ligand>
        <name>5-phospho-alpha-D-ribose 1-diphosphate</name>
        <dbReference type="ChEBI" id="CHEBI:58017"/>
        <note>ligand shared between dimeric partners</note>
    </ligand>
</feature>
<feature type="binding site" evidence="1">
    <location>
        <position position="112"/>
    </location>
    <ligand>
        <name>5-phospho-alpha-D-ribose 1-diphosphate</name>
        <dbReference type="ChEBI" id="CHEBI:58017"/>
        <note>ligand shared between dimeric partners</note>
    </ligand>
</feature>
<feature type="binding site" description="in other chain" evidence="1">
    <location>
        <begin position="133"/>
        <end position="141"/>
    </location>
    <ligand>
        <name>5-phospho-alpha-D-ribose 1-diphosphate</name>
        <dbReference type="ChEBI" id="CHEBI:58017"/>
        <note>ligand shared between dimeric partners</note>
    </ligand>
</feature>
<feature type="binding site" evidence="1">
    <location>
        <position position="137"/>
    </location>
    <ligand>
        <name>orotate</name>
        <dbReference type="ChEBI" id="CHEBI:30839"/>
    </ligand>
</feature>
<feature type="binding site" evidence="1">
    <location>
        <position position="166"/>
    </location>
    <ligand>
        <name>orotate</name>
        <dbReference type="ChEBI" id="CHEBI:30839"/>
    </ligand>
</feature>
<organism>
    <name type="scientific">Bifidobacterium longum (strain DJO10A)</name>
    <dbReference type="NCBI Taxonomy" id="205913"/>
    <lineage>
        <taxon>Bacteria</taxon>
        <taxon>Bacillati</taxon>
        <taxon>Actinomycetota</taxon>
        <taxon>Actinomycetes</taxon>
        <taxon>Bifidobacteriales</taxon>
        <taxon>Bifidobacteriaceae</taxon>
        <taxon>Bifidobacterium</taxon>
    </lineage>
</organism>
<dbReference type="EC" id="2.4.2.10" evidence="1"/>
<dbReference type="EMBL" id="CP000605">
    <property type="protein sequence ID" value="ACD97974.1"/>
    <property type="molecule type" value="Genomic_DNA"/>
</dbReference>
<dbReference type="RefSeq" id="WP_010080627.1">
    <property type="nucleotide sequence ID" value="NC_010816.1"/>
</dbReference>
<dbReference type="SMR" id="B3DS55"/>
<dbReference type="KEGG" id="blj:BLD_0528"/>
<dbReference type="HOGENOM" id="CLU_074878_0_1_11"/>
<dbReference type="UniPathway" id="UPA00070">
    <property type="reaction ID" value="UER00119"/>
</dbReference>
<dbReference type="Proteomes" id="UP000002419">
    <property type="component" value="Chromosome"/>
</dbReference>
<dbReference type="GO" id="GO:0005737">
    <property type="term" value="C:cytoplasm"/>
    <property type="evidence" value="ECO:0007669"/>
    <property type="project" value="TreeGrafter"/>
</dbReference>
<dbReference type="GO" id="GO:0000287">
    <property type="term" value="F:magnesium ion binding"/>
    <property type="evidence" value="ECO:0007669"/>
    <property type="project" value="UniProtKB-UniRule"/>
</dbReference>
<dbReference type="GO" id="GO:0004588">
    <property type="term" value="F:orotate phosphoribosyltransferase activity"/>
    <property type="evidence" value="ECO:0007669"/>
    <property type="project" value="UniProtKB-UniRule"/>
</dbReference>
<dbReference type="GO" id="GO:0006207">
    <property type="term" value="P:'de novo' pyrimidine nucleobase biosynthetic process"/>
    <property type="evidence" value="ECO:0007669"/>
    <property type="project" value="TreeGrafter"/>
</dbReference>
<dbReference type="GO" id="GO:0044205">
    <property type="term" value="P:'de novo' UMP biosynthetic process"/>
    <property type="evidence" value="ECO:0007669"/>
    <property type="project" value="UniProtKB-UniRule"/>
</dbReference>
<dbReference type="GO" id="GO:0046132">
    <property type="term" value="P:pyrimidine ribonucleoside biosynthetic process"/>
    <property type="evidence" value="ECO:0007669"/>
    <property type="project" value="TreeGrafter"/>
</dbReference>
<dbReference type="CDD" id="cd06223">
    <property type="entry name" value="PRTases_typeI"/>
    <property type="match status" value="1"/>
</dbReference>
<dbReference type="Gene3D" id="3.40.50.2020">
    <property type="match status" value="1"/>
</dbReference>
<dbReference type="HAMAP" id="MF_01208">
    <property type="entry name" value="PyrE"/>
    <property type="match status" value="1"/>
</dbReference>
<dbReference type="InterPro" id="IPR023031">
    <property type="entry name" value="OPRT"/>
</dbReference>
<dbReference type="InterPro" id="IPR004467">
    <property type="entry name" value="Or_phspho_trans_dom"/>
</dbReference>
<dbReference type="InterPro" id="IPR000836">
    <property type="entry name" value="PRibTrfase_dom"/>
</dbReference>
<dbReference type="InterPro" id="IPR029057">
    <property type="entry name" value="PRTase-like"/>
</dbReference>
<dbReference type="NCBIfam" id="TIGR00336">
    <property type="entry name" value="pyrE"/>
    <property type="match status" value="1"/>
</dbReference>
<dbReference type="PANTHER" id="PTHR46683">
    <property type="entry name" value="OROTATE PHOSPHORIBOSYLTRANSFERASE 1-RELATED"/>
    <property type="match status" value="1"/>
</dbReference>
<dbReference type="PANTHER" id="PTHR46683:SF1">
    <property type="entry name" value="OROTATE PHOSPHORIBOSYLTRANSFERASE 1-RELATED"/>
    <property type="match status" value="1"/>
</dbReference>
<dbReference type="Pfam" id="PF00156">
    <property type="entry name" value="Pribosyltran"/>
    <property type="match status" value="1"/>
</dbReference>
<dbReference type="SUPFAM" id="SSF53271">
    <property type="entry name" value="PRTase-like"/>
    <property type="match status" value="1"/>
</dbReference>
<dbReference type="PROSITE" id="PS00103">
    <property type="entry name" value="PUR_PYR_PR_TRANSFER"/>
    <property type="match status" value="1"/>
</dbReference>
<name>PYRE_BIFLD</name>